<protein>
    <recommendedName>
        <fullName>PDZ and LIM domain protein 4</fullName>
    </recommendedName>
    <alternativeName>
        <fullName>LIM protein RIL</fullName>
    </alternativeName>
    <alternativeName>
        <fullName>Reversion-induced LIM protein</fullName>
    </alternativeName>
</protein>
<evidence type="ECO:0000250" key="1">
    <source>
        <dbReference type="UniProtKB" id="P36202"/>
    </source>
</evidence>
<evidence type="ECO:0000250" key="2">
    <source>
        <dbReference type="UniProtKB" id="P50479"/>
    </source>
</evidence>
<evidence type="ECO:0000250" key="3">
    <source>
        <dbReference type="UniProtKB" id="P70271"/>
    </source>
</evidence>
<evidence type="ECO:0000255" key="4">
    <source>
        <dbReference type="PROSITE-ProRule" id="PRU00125"/>
    </source>
</evidence>
<evidence type="ECO:0000255" key="5">
    <source>
        <dbReference type="PROSITE-ProRule" id="PRU00143"/>
    </source>
</evidence>
<evidence type="ECO:0000256" key="6">
    <source>
        <dbReference type="SAM" id="MobiDB-lite"/>
    </source>
</evidence>
<evidence type="ECO:0000269" key="7">
    <source>
    </source>
</evidence>
<accession>Q9PW72</accession>
<dbReference type="EMBL" id="AF167295">
    <property type="protein sequence ID" value="AAD46655.1"/>
    <property type="molecule type" value="mRNA"/>
</dbReference>
<dbReference type="RefSeq" id="NP_990170.1">
    <property type="nucleotide sequence ID" value="NM_204839.3"/>
</dbReference>
<dbReference type="SMR" id="Q9PW72"/>
<dbReference type="FunCoup" id="Q9PW72">
    <property type="interactions" value="186"/>
</dbReference>
<dbReference type="STRING" id="9031.ENSGALP00000049470"/>
<dbReference type="PaxDb" id="9031-ENSGALP00000042746"/>
<dbReference type="Ensembl" id="ENSGALT00010039093.1">
    <property type="protein sequence ID" value="ENSGALP00010022578.1"/>
    <property type="gene ID" value="ENSGALG00010016266.1"/>
</dbReference>
<dbReference type="GeneID" id="395643"/>
<dbReference type="KEGG" id="gga:395643"/>
<dbReference type="CTD" id="8572"/>
<dbReference type="VEuPathDB" id="HostDB:geneid_395643"/>
<dbReference type="eggNOG" id="KOG1703">
    <property type="taxonomic scope" value="Eukaryota"/>
</dbReference>
<dbReference type="GeneTree" id="ENSGT00940000159536"/>
<dbReference type="HOGENOM" id="CLU_038114_1_1_1"/>
<dbReference type="InParanoid" id="Q9PW72"/>
<dbReference type="OrthoDB" id="1293114at2759"/>
<dbReference type="PhylomeDB" id="Q9PW72"/>
<dbReference type="TreeFam" id="TF106408"/>
<dbReference type="PRO" id="PR:Q9PW72"/>
<dbReference type="Proteomes" id="UP000000539">
    <property type="component" value="Chromosome 13"/>
</dbReference>
<dbReference type="GO" id="GO:0005912">
    <property type="term" value="C:adherens junction"/>
    <property type="evidence" value="ECO:0000318"/>
    <property type="project" value="GO_Central"/>
</dbReference>
<dbReference type="GO" id="GO:0005737">
    <property type="term" value="C:cytoplasm"/>
    <property type="evidence" value="ECO:0000314"/>
    <property type="project" value="AgBase"/>
</dbReference>
<dbReference type="GO" id="GO:0043197">
    <property type="term" value="C:dendritic spine"/>
    <property type="evidence" value="ECO:0000250"/>
    <property type="project" value="UniProtKB"/>
</dbReference>
<dbReference type="GO" id="GO:0031905">
    <property type="term" value="C:early endosome lumen"/>
    <property type="evidence" value="ECO:0000250"/>
    <property type="project" value="UniProtKB"/>
</dbReference>
<dbReference type="GO" id="GO:0031901">
    <property type="term" value="C:early endosome membrane"/>
    <property type="evidence" value="ECO:0007669"/>
    <property type="project" value="UniProtKB-SubCell"/>
</dbReference>
<dbReference type="GO" id="GO:0031941">
    <property type="term" value="C:filamentous actin"/>
    <property type="evidence" value="ECO:0000318"/>
    <property type="project" value="GO_Central"/>
</dbReference>
<dbReference type="GO" id="GO:0030027">
    <property type="term" value="C:lamellipodium"/>
    <property type="evidence" value="ECO:0007669"/>
    <property type="project" value="UniProtKB-SubCell"/>
</dbReference>
<dbReference type="GO" id="GO:0005634">
    <property type="term" value="C:nucleus"/>
    <property type="evidence" value="ECO:0007669"/>
    <property type="project" value="UniProtKB-SubCell"/>
</dbReference>
<dbReference type="GO" id="GO:0048471">
    <property type="term" value="C:perinuclear region of cytoplasm"/>
    <property type="evidence" value="ECO:0007669"/>
    <property type="project" value="UniProtKB-SubCell"/>
</dbReference>
<dbReference type="GO" id="GO:0045211">
    <property type="term" value="C:postsynaptic membrane"/>
    <property type="evidence" value="ECO:0000250"/>
    <property type="project" value="UniProtKB"/>
</dbReference>
<dbReference type="GO" id="GO:0034777">
    <property type="term" value="C:recycling endosome lumen"/>
    <property type="evidence" value="ECO:0000250"/>
    <property type="project" value="UniProtKB"/>
</dbReference>
<dbReference type="GO" id="GO:0055038">
    <property type="term" value="C:recycling endosome membrane"/>
    <property type="evidence" value="ECO:0007669"/>
    <property type="project" value="UniProtKB-SubCell"/>
</dbReference>
<dbReference type="GO" id="GO:0001725">
    <property type="term" value="C:stress fiber"/>
    <property type="evidence" value="ECO:0000318"/>
    <property type="project" value="GO_Central"/>
</dbReference>
<dbReference type="GO" id="GO:0030018">
    <property type="term" value="C:Z disc"/>
    <property type="evidence" value="ECO:0000318"/>
    <property type="project" value="GO_Central"/>
</dbReference>
<dbReference type="GO" id="GO:0003779">
    <property type="term" value="F:actin binding"/>
    <property type="evidence" value="ECO:0000318"/>
    <property type="project" value="GO_Central"/>
</dbReference>
<dbReference type="GO" id="GO:0051015">
    <property type="term" value="F:actin filament binding"/>
    <property type="evidence" value="ECO:0000314"/>
    <property type="project" value="AgBase"/>
</dbReference>
<dbReference type="GO" id="GO:0046872">
    <property type="term" value="F:metal ion binding"/>
    <property type="evidence" value="ECO:0007669"/>
    <property type="project" value="UniProtKB-KW"/>
</dbReference>
<dbReference type="GO" id="GO:0051371">
    <property type="term" value="F:muscle alpha-actinin binding"/>
    <property type="evidence" value="ECO:0000318"/>
    <property type="project" value="GO_Central"/>
</dbReference>
<dbReference type="GO" id="GO:0030036">
    <property type="term" value="P:actin cytoskeleton organization"/>
    <property type="evidence" value="ECO:0000318"/>
    <property type="project" value="GO_Central"/>
</dbReference>
<dbReference type="GO" id="GO:0098976">
    <property type="term" value="P:excitatory chemical synaptic transmission"/>
    <property type="evidence" value="ECO:0000250"/>
    <property type="project" value="UniProtKB"/>
</dbReference>
<dbReference type="GO" id="GO:0007507">
    <property type="term" value="P:heart development"/>
    <property type="evidence" value="ECO:0000318"/>
    <property type="project" value="GO_Central"/>
</dbReference>
<dbReference type="GO" id="GO:0060173">
    <property type="term" value="P:limb development"/>
    <property type="evidence" value="ECO:0000314"/>
    <property type="project" value="AgBase"/>
</dbReference>
<dbReference type="GO" id="GO:0061061">
    <property type="term" value="P:muscle structure development"/>
    <property type="evidence" value="ECO:0000318"/>
    <property type="project" value="GO_Central"/>
</dbReference>
<dbReference type="CDD" id="cd09451">
    <property type="entry name" value="LIM_RIL"/>
    <property type="match status" value="1"/>
</dbReference>
<dbReference type="CDD" id="cd06753">
    <property type="entry name" value="PDZ_PDLIM-like"/>
    <property type="match status" value="1"/>
</dbReference>
<dbReference type="FunFam" id="2.10.110.10:FF:000026">
    <property type="entry name" value="PDZ and LIM domain protein 3"/>
    <property type="match status" value="1"/>
</dbReference>
<dbReference type="FunFam" id="2.30.42.10:FF:000055">
    <property type="entry name" value="PDZ and LIM domain protein 3"/>
    <property type="match status" value="1"/>
</dbReference>
<dbReference type="Gene3D" id="2.30.42.10">
    <property type="match status" value="1"/>
</dbReference>
<dbReference type="Gene3D" id="2.10.110.10">
    <property type="entry name" value="Cysteine Rich Protein"/>
    <property type="match status" value="1"/>
</dbReference>
<dbReference type="InterPro" id="IPR031847">
    <property type="entry name" value="PDLI1-4/Zasp-like_mid"/>
</dbReference>
<dbReference type="InterPro" id="IPR001478">
    <property type="entry name" value="PDZ"/>
</dbReference>
<dbReference type="InterPro" id="IPR050604">
    <property type="entry name" value="PDZ-LIM_domain"/>
</dbReference>
<dbReference type="InterPro" id="IPR036034">
    <property type="entry name" value="PDZ_sf"/>
</dbReference>
<dbReference type="InterPro" id="IPR001781">
    <property type="entry name" value="Znf_LIM"/>
</dbReference>
<dbReference type="PANTHER" id="PTHR24214:SF6">
    <property type="entry name" value="PDZ AND LIM DOMAIN PROTEIN 4"/>
    <property type="match status" value="1"/>
</dbReference>
<dbReference type="PANTHER" id="PTHR24214">
    <property type="entry name" value="PDZ AND LIM DOMAIN PROTEIN ZASP"/>
    <property type="match status" value="1"/>
</dbReference>
<dbReference type="Pfam" id="PF15936">
    <property type="entry name" value="DUF4749"/>
    <property type="match status" value="1"/>
</dbReference>
<dbReference type="Pfam" id="PF00412">
    <property type="entry name" value="LIM"/>
    <property type="match status" value="1"/>
</dbReference>
<dbReference type="Pfam" id="PF00595">
    <property type="entry name" value="PDZ"/>
    <property type="match status" value="1"/>
</dbReference>
<dbReference type="SMART" id="SM00132">
    <property type="entry name" value="LIM"/>
    <property type="match status" value="1"/>
</dbReference>
<dbReference type="SMART" id="SM00228">
    <property type="entry name" value="PDZ"/>
    <property type="match status" value="1"/>
</dbReference>
<dbReference type="SUPFAM" id="SSF57716">
    <property type="entry name" value="Glucocorticoid receptor-like (DNA-binding domain)"/>
    <property type="match status" value="2"/>
</dbReference>
<dbReference type="SUPFAM" id="SSF50156">
    <property type="entry name" value="PDZ domain-like"/>
    <property type="match status" value="1"/>
</dbReference>
<dbReference type="PROSITE" id="PS00478">
    <property type="entry name" value="LIM_DOMAIN_1"/>
    <property type="match status" value="1"/>
</dbReference>
<dbReference type="PROSITE" id="PS50023">
    <property type="entry name" value="LIM_DOMAIN_2"/>
    <property type="match status" value="1"/>
</dbReference>
<dbReference type="PROSITE" id="PS50106">
    <property type="entry name" value="PDZ"/>
    <property type="match status" value="1"/>
</dbReference>
<sequence length="330" mass="35839">MPHSVALRGPSPWGFRLVGGKDFSTPLTISRINPGSKAALANLCPGDIILAINGESTEAMTHLEAQNKIKACVEQLLLSVSRAEERSWSPPILEDGKAQAYRINIEPEPQDNGPAVGKRPMPHAAGGSPVDSRPALSLQHPQPSRPHASSSADAALPLQLSGLHISPSQSTDPLKSLPRNRNGIDVESDVYKMLQDYERPASEPKQSGSFRYLQGMLEAGENGEKLDRLSNPRSIKPAGPKLGAAMSGLQMLPECTRCGNGIVGTIVKARDKLYHPECFMCDDCGLNLKQRGYFFIEEQLYCETHAKERVKPPEGYDVVAVYPNAKVELV</sequence>
<feature type="chain" id="PRO_0000075876" description="PDZ and LIM domain protein 4">
    <location>
        <begin position="1"/>
        <end position="330"/>
    </location>
</feature>
<feature type="domain" description="PDZ" evidence="5">
    <location>
        <begin position="8"/>
        <end position="84"/>
    </location>
</feature>
<feature type="domain" description="LIM zinc-binding" evidence="4">
    <location>
        <begin position="255"/>
        <end position="305"/>
    </location>
</feature>
<feature type="region of interest" description="Disordered" evidence="6">
    <location>
        <begin position="106"/>
        <end position="152"/>
    </location>
</feature>
<feature type="region of interest" description="Disordered" evidence="6">
    <location>
        <begin position="163"/>
        <end position="182"/>
    </location>
</feature>
<feature type="compositionally biased region" description="Polar residues" evidence="6">
    <location>
        <begin position="139"/>
        <end position="152"/>
    </location>
</feature>
<gene>
    <name type="primary">PDLIM4</name>
    <name type="synonym">RIL</name>
</gene>
<comment type="function">
    <text evidence="1 2">Suppresses SRC activation by recognizing and binding to active SRC and facilitating PTPN13-mediated dephosphorylation of SRC 'Tyr-419' leading to its inactivation. Inactivated SRC dissociates from this protein allowing the initiation of a new SRC inactivation cycle. Involved in reorganization of the actin cytoskeleton (By similarity). In nonmuscle cells, binds to ACTN1 (alpha-actinin-1), increases the affinity of ACTN1 to F-actin (filamentous actin), and promotes formation of actin stress fibers. Involved in regulation of the synaptic AMPA receptor transport in dendritic spines of hippocampal pyramidal neurons directing the receptors toward an insertion at the postsynaptic membrane. Links endosomal surface-internalized GRIA1-containing AMPA receptors to the alpha-actinin/actin cytoskeleton. Increases AMPA receptor-mediated excitatory postsynaptic currents in neurons (By similarity).</text>
</comment>
<comment type="subunit">
    <text evidence="3 7">Interacts (via LIM domain) with PTPN13 (By similarity). Interacts (via PDZ domain) with ACTN1 (PubMed:14729062).</text>
</comment>
<comment type="subcellular location">
    <subcellularLocation>
        <location evidence="1">Cytoplasm</location>
        <location evidence="1">Cytoskeleton</location>
    </subcellularLocation>
    <subcellularLocation>
        <location evidence="1">Cell projection</location>
        <location evidence="1">Dendritic spine</location>
    </subcellularLocation>
    <subcellularLocation>
        <location evidence="1">Early endosome membrane</location>
        <topology evidence="1">Peripheral membrane protein</topology>
        <orientation evidence="1">Cytoplasmic side</orientation>
    </subcellularLocation>
    <subcellularLocation>
        <location evidence="1">Recycling endosome membrane</location>
        <topology evidence="1">Peripheral membrane protein</topology>
        <orientation evidence="1">Cytoplasmic side</orientation>
    </subcellularLocation>
    <subcellularLocation>
        <location evidence="2">Nucleus</location>
    </subcellularLocation>
    <subcellularLocation>
        <location evidence="2">Cytoplasm</location>
        <location evidence="2">Perinuclear region</location>
    </subcellularLocation>
    <subcellularLocation>
        <location evidence="2">Cell projection</location>
        <location evidence="2">Lamellipodium</location>
    </subcellularLocation>
    <subcellularLocation>
        <location evidence="1">Synapse</location>
        <location evidence="1">Synaptosome</location>
    </subcellularLocation>
    <text evidence="1 2">Localizes to actin stress fibers in nonmuscle cells. Colocalizes with GRIA1 in early endosomes. Enriched in numerous but not all spine-like structures along dendritic branches. Colocalizes with actin and enriched at sites containing larger amounts of actin and alpha-actinin. Targeted efficiently to spines via its PDZ domain-mediated interaction with the alpha-actinin/actin cytoskeletal complex. Localizes to synaptosomes in brain (By similarity). Colocalizes with F-actin. Colocalizes with TRIP6 at cell-cell contacts and lamellipodia. In the cytoplasm, displays a fibrillar pattern with characteristic thick fibers and occasional clusters. Colocalizes with the actin stress fibers. Oxidative stress induces redistribution from cytoskeleton to cytosol. Colocalizes with SRC at the perinuclear region, but not at focal adhesions (By similarity).</text>
</comment>
<organism>
    <name type="scientific">Gallus gallus</name>
    <name type="common">Chicken</name>
    <dbReference type="NCBI Taxonomy" id="9031"/>
    <lineage>
        <taxon>Eukaryota</taxon>
        <taxon>Metazoa</taxon>
        <taxon>Chordata</taxon>
        <taxon>Craniata</taxon>
        <taxon>Vertebrata</taxon>
        <taxon>Euteleostomi</taxon>
        <taxon>Archelosauria</taxon>
        <taxon>Archosauria</taxon>
        <taxon>Dinosauria</taxon>
        <taxon>Saurischia</taxon>
        <taxon>Theropoda</taxon>
        <taxon>Coelurosauria</taxon>
        <taxon>Aves</taxon>
        <taxon>Neognathae</taxon>
        <taxon>Galloanserae</taxon>
        <taxon>Galliformes</taxon>
        <taxon>Phasianidae</taxon>
        <taxon>Phasianinae</taxon>
        <taxon>Gallus</taxon>
    </lineage>
</organism>
<name>PDLI4_CHICK</name>
<proteinExistence type="evidence at protein level"/>
<keyword id="KW-0966">Cell projection</keyword>
<keyword id="KW-0963">Cytoplasm</keyword>
<keyword id="KW-0206">Cytoskeleton</keyword>
<keyword id="KW-0967">Endosome</keyword>
<keyword id="KW-0440">LIM domain</keyword>
<keyword id="KW-0472">Membrane</keyword>
<keyword id="KW-0479">Metal-binding</keyword>
<keyword id="KW-0539">Nucleus</keyword>
<keyword id="KW-1185">Reference proteome</keyword>
<keyword id="KW-0770">Synapse</keyword>
<keyword id="KW-0771">Synaptosome</keyword>
<keyword id="KW-0862">Zinc</keyword>
<reference key="1">
    <citation type="journal article" date="2000" name="Oncogene">
        <title>Identification and characterization of genes upregulated in cells transformed by v-Jun.</title>
        <authorList>
            <person name="Fu S.-L."/>
            <person name="Waha A."/>
            <person name="Vogt P.K."/>
        </authorList>
    </citation>
    <scope>NUCLEOTIDE SEQUENCE [MRNA]</scope>
    <source>
        <strain>White leghorn</strain>
    </source>
</reference>
<reference key="2">
    <citation type="journal article" date="2004" name="Exp. Cell Res.">
        <title>The PDZ-LIM protein RIL modulates actin stress fiber turnover and enhances the association of alpha-actinin with F-actin.</title>
        <authorList>
            <person name="Vallenius T."/>
            <person name="Scharm B."/>
            <person name="Vesikansa A."/>
            <person name="Luukko K."/>
            <person name="Schaefer R."/>
            <person name="Maekelae T.P."/>
        </authorList>
    </citation>
    <scope>INTERACTION WITH ACTN1</scope>
</reference>